<dbReference type="EC" id="6.3.4.5" evidence="1"/>
<dbReference type="EMBL" id="CP000527">
    <property type="protein sequence ID" value="ABM28916.1"/>
    <property type="molecule type" value="Genomic_DNA"/>
</dbReference>
<dbReference type="RefSeq" id="WP_011792532.1">
    <property type="nucleotide sequence ID" value="NC_008751.1"/>
</dbReference>
<dbReference type="SMR" id="A1VEQ0"/>
<dbReference type="KEGG" id="dvl:Dvul_1900"/>
<dbReference type="HOGENOM" id="CLU_032784_4_2_7"/>
<dbReference type="UniPathway" id="UPA00068">
    <property type="reaction ID" value="UER00113"/>
</dbReference>
<dbReference type="Proteomes" id="UP000009173">
    <property type="component" value="Chromosome"/>
</dbReference>
<dbReference type="GO" id="GO:0005737">
    <property type="term" value="C:cytoplasm"/>
    <property type="evidence" value="ECO:0007669"/>
    <property type="project" value="UniProtKB-SubCell"/>
</dbReference>
<dbReference type="GO" id="GO:0004055">
    <property type="term" value="F:argininosuccinate synthase activity"/>
    <property type="evidence" value="ECO:0007669"/>
    <property type="project" value="UniProtKB-UniRule"/>
</dbReference>
<dbReference type="GO" id="GO:0005524">
    <property type="term" value="F:ATP binding"/>
    <property type="evidence" value="ECO:0007669"/>
    <property type="project" value="UniProtKB-UniRule"/>
</dbReference>
<dbReference type="GO" id="GO:0000053">
    <property type="term" value="P:argininosuccinate metabolic process"/>
    <property type="evidence" value="ECO:0007669"/>
    <property type="project" value="TreeGrafter"/>
</dbReference>
<dbReference type="GO" id="GO:0006526">
    <property type="term" value="P:L-arginine biosynthetic process"/>
    <property type="evidence" value="ECO:0007669"/>
    <property type="project" value="UniProtKB-UniRule"/>
</dbReference>
<dbReference type="GO" id="GO:0000050">
    <property type="term" value="P:urea cycle"/>
    <property type="evidence" value="ECO:0007669"/>
    <property type="project" value="TreeGrafter"/>
</dbReference>
<dbReference type="CDD" id="cd01999">
    <property type="entry name" value="ASS"/>
    <property type="match status" value="1"/>
</dbReference>
<dbReference type="FunFam" id="3.40.50.620:FF:000019">
    <property type="entry name" value="Argininosuccinate synthase"/>
    <property type="match status" value="1"/>
</dbReference>
<dbReference type="FunFam" id="3.90.1260.10:FF:000007">
    <property type="entry name" value="Argininosuccinate synthase"/>
    <property type="match status" value="1"/>
</dbReference>
<dbReference type="Gene3D" id="3.90.1260.10">
    <property type="entry name" value="Argininosuccinate synthetase, chain A, domain 2"/>
    <property type="match status" value="1"/>
</dbReference>
<dbReference type="Gene3D" id="3.40.50.620">
    <property type="entry name" value="HUPs"/>
    <property type="match status" value="1"/>
</dbReference>
<dbReference type="Gene3D" id="1.20.5.470">
    <property type="entry name" value="Single helix bin"/>
    <property type="match status" value="1"/>
</dbReference>
<dbReference type="HAMAP" id="MF_00005">
    <property type="entry name" value="Arg_succ_synth_type1"/>
    <property type="match status" value="1"/>
</dbReference>
<dbReference type="InterPro" id="IPR048268">
    <property type="entry name" value="Arginosuc_syn_C"/>
</dbReference>
<dbReference type="InterPro" id="IPR048267">
    <property type="entry name" value="Arginosuc_syn_N"/>
</dbReference>
<dbReference type="InterPro" id="IPR001518">
    <property type="entry name" value="Arginosuc_synth"/>
</dbReference>
<dbReference type="InterPro" id="IPR018223">
    <property type="entry name" value="Arginosuc_synth_CS"/>
</dbReference>
<dbReference type="InterPro" id="IPR023434">
    <property type="entry name" value="Arginosuc_synth_type_1_subfam"/>
</dbReference>
<dbReference type="InterPro" id="IPR024074">
    <property type="entry name" value="AS_cat/multimer_dom_body"/>
</dbReference>
<dbReference type="InterPro" id="IPR014729">
    <property type="entry name" value="Rossmann-like_a/b/a_fold"/>
</dbReference>
<dbReference type="NCBIfam" id="TIGR00032">
    <property type="entry name" value="argG"/>
    <property type="match status" value="1"/>
</dbReference>
<dbReference type="NCBIfam" id="NF001770">
    <property type="entry name" value="PRK00509.1"/>
    <property type="match status" value="1"/>
</dbReference>
<dbReference type="PANTHER" id="PTHR11587">
    <property type="entry name" value="ARGININOSUCCINATE SYNTHASE"/>
    <property type="match status" value="1"/>
</dbReference>
<dbReference type="PANTHER" id="PTHR11587:SF2">
    <property type="entry name" value="ARGININOSUCCINATE SYNTHASE"/>
    <property type="match status" value="1"/>
</dbReference>
<dbReference type="Pfam" id="PF20979">
    <property type="entry name" value="Arginosuc_syn_C"/>
    <property type="match status" value="1"/>
</dbReference>
<dbReference type="Pfam" id="PF00764">
    <property type="entry name" value="Arginosuc_synth"/>
    <property type="match status" value="1"/>
</dbReference>
<dbReference type="SUPFAM" id="SSF52402">
    <property type="entry name" value="Adenine nucleotide alpha hydrolases-like"/>
    <property type="match status" value="1"/>
</dbReference>
<dbReference type="SUPFAM" id="SSF69864">
    <property type="entry name" value="Argininosuccinate synthetase, C-terminal domain"/>
    <property type="match status" value="1"/>
</dbReference>
<dbReference type="PROSITE" id="PS00564">
    <property type="entry name" value="ARGININOSUCCIN_SYN_1"/>
    <property type="match status" value="1"/>
</dbReference>
<dbReference type="PROSITE" id="PS00565">
    <property type="entry name" value="ARGININOSUCCIN_SYN_2"/>
    <property type="match status" value="1"/>
</dbReference>
<protein>
    <recommendedName>
        <fullName evidence="1">Argininosuccinate synthase</fullName>
        <ecNumber evidence="1">6.3.4.5</ecNumber>
    </recommendedName>
    <alternativeName>
        <fullName evidence="1">Citrulline--aspartate ligase</fullName>
    </alternativeName>
</protein>
<gene>
    <name evidence="1" type="primary">argG</name>
    <name type="ordered locus">Dvul_1900</name>
</gene>
<keyword id="KW-0028">Amino-acid biosynthesis</keyword>
<keyword id="KW-0055">Arginine biosynthesis</keyword>
<keyword id="KW-0067">ATP-binding</keyword>
<keyword id="KW-0963">Cytoplasm</keyword>
<keyword id="KW-0436">Ligase</keyword>
<keyword id="KW-0547">Nucleotide-binding</keyword>
<reference key="1">
    <citation type="journal article" date="2009" name="Environ. Microbiol.">
        <title>Contribution of mobile genetic elements to Desulfovibrio vulgaris genome plasticity.</title>
        <authorList>
            <person name="Walker C.B."/>
            <person name="Stolyar S."/>
            <person name="Chivian D."/>
            <person name="Pinel N."/>
            <person name="Gabster J.A."/>
            <person name="Dehal P.S."/>
            <person name="He Z."/>
            <person name="Yang Z.K."/>
            <person name="Yen H.C."/>
            <person name="Zhou J."/>
            <person name="Wall J.D."/>
            <person name="Hazen T.C."/>
            <person name="Arkin A.P."/>
            <person name="Stahl D.A."/>
        </authorList>
    </citation>
    <scope>NUCLEOTIDE SEQUENCE [LARGE SCALE GENOMIC DNA]</scope>
    <source>
        <strain>DP4</strain>
    </source>
</reference>
<accession>A1VEQ0</accession>
<feature type="chain" id="PRO_1000000394" description="Argininosuccinate synthase">
    <location>
        <begin position="1"/>
        <end position="396"/>
    </location>
</feature>
<feature type="binding site" evidence="1">
    <location>
        <begin position="10"/>
        <end position="18"/>
    </location>
    <ligand>
        <name>ATP</name>
        <dbReference type="ChEBI" id="CHEBI:30616"/>
    </ligand>
</feature>
<feature type="binding site" evidence="1">
    <location>
        <position position="37"/>
    </location>
    <ligand>
        <name>ATP</name>
        <dbReference type="ChEBI" id="CHEBI:30616"/>
    </ligand>
</feature>
<feature type="binding site" evidence="1">
    <location>
        <position position="88"/>
    </location>
    <ligand>
        <name>L-citrulline</name>
        <dbReference type="ChEBI" id="CHEBI:57743"/>
    </ligand>
</feature>
<feature type="binding site" evidence="1">
    <location>
        <position position="93"/>
    </location>
    <ligand>
        <name>L-citrulline</name>
        <dbReference type="ChEBI" id="CHEBI:57743"/>
    </ligand>
</feature>
<feature type="binding site" evidence="1">
    <location>
        <position position="118"/>
    </location>
    <ligand>
        <name>ATP</name>
        <dbReference type="ChEBI" id="CHEBI:30616"/>
    </ligand>
</feature>
<feature type="binding site" evidence="1">
    <location>
        <position position="120"/>
    </location>
    <ligand>
        <name>L-aspartate</name>
        <dbReference type="ChEBI" id="CHEBI:29991"/>
    </ligand>
</feature>
<feature type="binding site" evidence="1">
    <location>
        <position position="124"/>
    </location>
    <ligand>
        <name>L-aspartate</name>
        <dbReference type="ChEBI" id="CHEBI:29991"/>
    </ligand>
</feature>
<feature type="binding site" evidence="1">
    <location>
        <position position="124"/>
    </location>
    <ligand>
        <name>L-citrulline</name>
        <dbReference type="ChEBI" id="CHEBI:57743"/>
    </ligand>
</feature>
<feature type="binding site" evidence="1">
    <location>
        <position position="125"/>
    </location>
    <ligand>
        <name>L-aspartate</name>
        <dbReference type="ChEBI" id="CHEBI:29991"/>
    </ligand>
</feature>
<feature type="binding site" evidence="1">
    <location>
        <position position="128"/>
    </location>
    <ligand>
        <name>L-citrulline</name>
        <dbReference type="ChEBI" id="CHEBI:57743"/>
    </ligand>
</feature>
<feature type="binding site" evidence="1">
    <location>
        <position position="176"/>
    </location>
    <ligand>
        <name>L-citrulline</name>
        <dbReference type="ChEBI" id="CHEBI:57743"/>
    </ligand>
</feature>
<feature type="binding site" evidence="1">
    <location>
        <position position="185"/>
    </location>
    <ligand>
        <name>L-citrulline</name>
        <dbReference type="ChEBI" id="CHEBI:57743"/>
    </ligand>
</feature>
<feature type="binding site" evidence="1">
    <location>
        <position position="261"/>
    </location>
    <ligand>
        <name>L-citrulline</name>
        <dbReference type="ChEBI" id="CHEBI:57743"/>
    </ligand>
</feature>
<feature type="binding site" evidence="1">
    <location>
        <position position="273"/>
    </location>
    <ligand>
        <name>L-citrulline</name>
        <dbReference type="ChEBI" id="CHEBI:57743"/>
    </ligand>
</feature>
<comment type="catalytic activity">
    <reaction evidence="1">
        <text>L-citrulline + L-aspartate + ATP = 2-(N(omega)-L-arginino)succinate + AMP + diphosphate + H(+)</text>
        <dbReference type="Rhea" id="RHEA:10932"/>
        <dbReference type="ChEBI" id="CHEBI:15378"/>
        <dbReference type="ChEBI" id="CHEBI:29991"/>
        <dbReference type="ChEBI" id="CHEBI:30616"/>
        <dbReference type="ChEBI" id="CHEBI:33019"/>
        <dbReference type="ChEBI" id="CHEBI:57472"/>
        <dbReference type="ChEBI" id="CHEBI:57743"/>
        <dbReference type="ChEBI" id="CHEBI:456215"/>
        <dbReference type="EC" id="6.3.4.5"/>
    </reaction>
</comment>
<comment type="pathway">
    <text evidence="1">Amino-acid biosynthesis; L-arginine biosynthesis; L-arginine from L-ornithine and carbamoyl phosphate: step 2/3.</text>
</comment>
<comment type="subunit">
    <text evidence="1">Homotetramer.</text>
</comment>
<comment type="subcellular location">
    <subcellularLocation>
        <location evidence="1">Cytoplasm</location>
    </subcellularLocation>
</comment>
<comment type="similarity">
    <text evidence="1">Belongs to the argininosuccinate synthase family. Type 1 subfamily.</text>
</comment>
<name>ASSY_NITV4</name>
<evidence type="ECO:0000255" key="1">
    <source>
        <dbReference type="HAMAP-Rule" id="MF_00005"/>
    </source>
</evidence>
<organism>
    <name type="scientific">Nitratidesulfovibrio vulgaris (strain DP4)</name>
    <name type="common">Desulfovibrio vulgaris</name>
    <dbReference type="NCBI Taxonomy" id="391774"/>
    <lineage>
        <taxon>Bacteria</taxon>
        <taxon>Pseudomonadati</taxon>
        <taxon>Thermodesulfobacteriota</taxon>
        <taxon>Desulfovibrionia</taxon>
        <taxon>Desulfovibrionales</taxon>
        <taxon>Desulfovibrionaceae</taxon>
        <taxon>Nitratidesulfovibrio</taxon>
    </lineage>
</organism>
<proteinExistence type="inferred from homology"/>
<sequence>MSGIKKVVLAYSGGLDTSVILKWLAVTYNCEVVTLTADLGQEEDLDGVDDKAMRTGASRAYVEDLQEEFARDFIFPMMRAGAVYEGRYLLGTSIARPLIAKRLVEIARAEGAQAVAHGATGKGNDQVRFELAVNALAPDLRVIAPWREWDLRSRTQLNAFAEEHGIPISNSAKQYSMDRNMLHCSFEGGELEDPWNEPGPNSYVMAVPMEQAPDEAEYISIDFEHGNPVAVNGERLSPAALVKKLNSIGGRHGIGRLDMVENRFVGIKSRGVYETPGGTLIHIAHRDLEGICIDRETMHLRDAMLPRYAAAIYNGFWFAPEREAMQAMIDVSQQRVTGTVRLKLYKGNAWPVGRQSPNTLYCHDLATFEDCATYDHKDAAGFIKLQGLRIRGYKKG</sequence>